<sequence>MALRAMRGIVNGAAPELPVPTSGPLAGSREQALAVSRNYLSQPRLTYKTVSGVNGPLVILDHVKFPRYAEIVHLTLPDGTKRSGQVLEVSGSKAVVQVFEGTSGIDAKKTSCEFTGDILRTPVSEDMLGRVFNGSGKPIDRGPVVLAEDFLDIMGQPINPQCRIYPEEMIQTGISAIDGMNSIARGQKIPIFSAAGLPHNEIAAQICRQAGLVKKSKDVVDYSEENFAIVFAAMGVNMETARFFKSDFEENGSMDNVCLFLNLANDPTIERIITPRLALTTAEFLAYQCEKHVLVILTDMSSYAEALREVSAAREEVPGRRGFPGYMYTDLATIYERAGRVEGRNGSITQIPILTMPNDDITHPIPDLTGYITEGQIYVDRQLHNRQIYPPINVLPSLSRLMKSAIGEGMTRKDHADVSNQLYACYAIGKDVQAMKAVVGEEALTSDDLLYLEFLQKFERNFIAQGPYENRTVYETLDIGWQLLRIFPKEMLKRIPQSTLSEFYPRDSAKH</sequence>
<reference key="1">
    <citation type="journal article" date="1992" name="Proc. Natl. Acad. Sci. U.S.A.">
        <title>Selectively amplified expression of an isoform of the vacuolar H(+)-ATPase 56-kilodalton subunit in renal intercalated cells.</title>
        <authorList>
            <person name="Nelson R.D."/>
            <person name="Guo X.-L."/>
            <person name="Masood K."/>
            <person name="Brown D."/>
            <person name="Kalkbrenner M."/>
            <person name="Gluck S."/>
        </authorList>
    </citation>
    <scope>NUCLEOTIDE SEQUENCE [MRNA]</scope>
    <source>
        <tissue>Brain</tissue>
    </source>
</reference>
<reference key="2">
    <citation type="journal article" date="1992" name="J. Biol. Chem.">
        <title>Differential expression of the 'B' subunit of the vacuolar H(+)-ATPase in bovine tissues.</title>
        <authorList>
            <person name="Puopolo K."/>
            <person name="Kumamoto C."/>
            <person name="Adachi I."/>
            <person name="Magner R."/>
            <person name="Forgac M."/>
        </authorList>
    </citation>
    <scope>NUCLEOTIDE SEQUENCE [MRNA]</scope>
    <scope>PROTEIN SEQUENCE OF 30-58</scope>
    <scope>TISSUE SPECIFICITY</scope>
    <source>
        <tissue>Brain</tissue>
    </source>
</reference>
<reference key="3">
    <citation type="journal article" date="1991" name="FEBS Lett.">
        <title>Structure and expression of subunit A from the bovine chromaffin cell vacuolar ATPase.</title>
        <authorList>
            <person name="Pan Y.X."/>
            <person name="Xu J."/>
            <person name="Strasser J.E."/>
            <person name="Howell M."/>
            <person name="Dean G.E."/>
        </authorList>
    </citation>
    <scope>NUCLEOTIDE SEQUENCE [MRNA]</scope>
</reference>
<reference key="4">
    <citation type="submission" date="2006-09" db="EMBL/GenBank/DDBJ databases">
        <authorList>
            <consortium name="NIH - Mammalian Gene Collection (MGC) project"/>
        </authorList>
    </citation>
    <scope>NUCLEOTIDE SEQUENCE [LARGE SCALE MRNA]</scope>
    <source>
        <strain>Hereford</strain>
        <tissue>Hippocampus</tissue>
    </source>
</reference>
<reference evidence="9 10" key="5">
    <citation type="journal article" date="2020" name="Nat. Commun.">
        <title>Cryo-EM structures of intact V-ATPase from bovine brain.</title>
        <authorList>
            <person name="Wang R."/>
            <person name="Long T."/>
            <person name="Hassan A."/>
            <person name="Wang J."/>
            <person name="Sun Y."/>
            <person name="Xie X.S."/>
            <person name="Li X."/>
        </authorList>
    </citation>
    <scope>STRUCTURE BY ELECTRON MICROSCOPY (3.37 ANGSTROMS) IN COMPLEX WITH ADP</scope>
    <scope>FUNCTION</scope>
    <scope>IDENTIFICATION IN THE V-ATPASE COMPLEX</scope>
    <scope>SUBCELLULAR LOCATION</scope>
    <scope>IDENTIFICATION BY MASS SPECTROMETRY</scope>
    <scope>TISSUE SPECIFICITY</scope>
</reference>
<organism>
    <name type="scientific">Bos taurus</name>
    <name type="common">Bovine</name>
    <dbReference type="NCBI Taxonomy" id="9913"/>
    <lineage>
        <taxon>Eukaryota</taxon>
        <taxon>Metazoa</taxon>
        <taxon>Chordata</taxon>
        <taxon>Craniata</taxon>
        <taxon>Vertebrata</taxon>
        <taxon>Euteleostomi</taxon>
        <taxon>Mammalia</taxon>
        <taxon>Eutheria</taxon>
        <taxon>Laurasiatheria</taxon>
        <taxon>Artiodactyla</taxon>
        <taxon>Ruminantia</taxon>
        <taxon>Pecora</taxon>
        <taxon>Bovidae</taxon>
        <taxon>Bovinae</taxon>
        <taxon>Bos</taxon>
    </lineage>
</organism>
<protein>
    <recommendedName>
        <fullName>V-type proton ATPase subunit B, brain isoform</fullName>
        <shortName>V-ATPase subunit B 2</shortName>
    </recommendedName>
    <alternativeName>
        <fullName>Endomembrane proton pump 58 kDa subunit</fullName>
    </alternativeName>
    <alternativeName>
        <fullName>Vacuolar proton pump subunit B 2</fullName>
    </alternativeName>
</protein>
<feature type="chain" id="PRO_0000144625" description="V-type proton ATPase subunit B, brain isoform">
    <location>
        <begin position="1"/>
        <end position="511"/>
    </location>
</feature>
<feature type="binding site" evidence="7 8 10">
    <location>
        <position position="400"/>
    </location>
    <ligand>
        <name>ATP</name>
        <dbReference type="ChEBI" id="CHEBI:30616"/>
    </ligand>
</feature>
<feature type="sequence conflict" description="In Ref. 1; AAA30400." evidence="6" ref="1">
    <location>
        <position position="24"/>
    </location>
</feature>
<feature type="sequence conflict" description="In Ref. 2; AAA30391." evidence="6" ref="2">
    <original>S</original>
    <variation>T</variation>
    <location>
        <position position="83"/>
    </location>
</feature>
<feature type="sequence conflict" description="In Ref. 1; AAA30400." evidence="6" ref="1">
    <original>QC</original>
    <variation>HF</variation>
    <location>
        <begin position="161"/>
        <end position="162"/>
    </location>
</feature>
<feature type="sequence conflict" description="In Ref. 3; CAA41275." evidence="6" ref="3">
    <original>E</original>
    <variation>Q</variation>
    <location>
        <position position="250"/>
    </location>
</feature>
<feature type="sequence conflict" description="In Ref. 1; AAA30400." evidence="6" ref="1">
    <original>R</original>
    <variation>K</variation>
    <location>
        <position position="460"/>
    </location>
</feature>
<feature type="sequence conflict" description="In Ref. 1; AAA30400." evidence="6" ref="1">
    <original>A</original>
    <variation>T</variation>
    <location>
        <position position="464"/>
    </location>
</feature>
<feature type="sequence conflict" description="In Ref. 2; AAA30391." evidence="6" ref="2">
    <original>KH</original>
    <variation>NS</variation>
    <location>
        <begin position="510"/>
        <end position="511"/>
    </location>
</feature>
<feature type="strand" evidence="11">
    <location>
        <begin position="45"/>
        <end position="47"/>
    </location>
</feature>
<feature type="strand" evidence="11">
    <location>
        <begin position="50"/>
        <end position="54"/>
    </location>
</feature>
<feature type="strand" evidence="11">
    <location>
        <begin position="57"/>
        <end position="60"/>
    </location>
</feature>
<feature type="strand" evidence="11">
    <location>
        <begin position="68"/>
        <end position="75"/>
    </location>
</feature>
<feature type="strand" evidence="11">
    <location>
        <begin position="81"/>
        <end position="90"/>
    </location>
</feature>
<feature type="strand" evidence="11">
    <location>
        <begin position="93"/>
        <end position="100"/>
    </location>
</feature>
<feature type="strand" evidence="11">
    <location>
        <begin position="107"/>
        <end position="109"/>
    </location>
</feature>
<feature type="strand" evidence="11">
    <location>
        <begin position="111"/>
        <end position="118"/>
    </location>
</feature>
<feature type="strand" evidence="11">
    <location>
        <begin position="120"/>
        <end position="123"/>
    </location>
</feature>
<feature type="strand" evidence="11">
    <location>
        <begin position="134"/>
        <end position="136"/>
    </location>
</feature>
<feature type="strand" evidence="11">
    <location>
        <begin position="148"/>
        <end position="154"/>
    </location>
</feature>
<feature type="strand" evidence="11">
    <location>
        <begin position="162"/>
        <end position="164"/>
    </location>
</feature>
<feature type="strand" evidence="11">
    <location>
        <begin position="168"/>
        <end position="171"/>
    </location>
</feature>
<feature type="helix" evidence="11">
    <location>
        <begin position="175"/>
        <end position="178"/>
    </location>
</feature>
<feature type="strand" evidence="11">
    <location>
        <begin position="191"/>
        <end position="193"/>
    </location>
</feature>
<feature type="turn" evidence="11">
    <location>
        <begin position="199"/>
        <end position="204"/>
    </location>
</feature>
<feature type="helix" evidence="11">
    <location>
        <begin position="205"/>
        <end position="208"/>
    </location>
</feature>
<feature type="strand" evidence="11">
    <location>
        <begin position="227"/>
        <end position="233"/>
    </location>
</feature>
<feature type="helix" evidence="11">
    <location>
        <begin position="238"/>
        <end position="248"/>
    </location>
</feature>
<feature type="helix" evidence="11">
    <location>
        <begin position="249"/>
        <end position="251"/>
    </location>
</feature>
<feature type="strand" evidence="11">
    <location>
        <begin position="263"/>
        <end position="266"/>
    </location>
</feature>
<feature type="turn" evidence="11">
    <location>
        <begin position="270"/>
        <end position="272"/>
    </location>
</feature>
<feature type="helix" evidence="11">
    <location>
        <begin position="273"/>
        <end position="284"/>
    </location>
</feature>
<feature type="strand" evidence="11">
    <location>
        <begin position="285"/>
        <end position="289"/>
    </location>
</feature>
<feature type="strand" evidence="11">
    <location>
        <begin position="292"/>
        <end position="298"/>
    </location>
</feature>
<feature type="helix" evidence="11">
    <location>
        <begin position="302"/>
        <end position="313"/>
    </location>
</feature>
<feature type="helix" evidence="11">
    <location>
        <begin position="320"/>
        <end position="322"/>
    </location>
</feature>
<feature type="helix" evidence="11">
    <location>
        <begin position="327"/>
        <end position="335"/>
    </location>
</feature>
<feature type="strand" evidence="11">
    <location>
        <begin position="339"/>
        <end position="343"/>
    </location>
</feature>
<feature type="strand" evidence="11">
    <location>
        <begin position="347"/>
        <end position="355"/>
    </location>
</feature>
<feature type="helix" evidence="11">
    <location>
        <begin position="357"/>
        <end position="359"/>
    </location>
</feature>
<feature type="helix" evidence="11">
    <location>
        <begin position="364"/>
        <end position="368"/>
    </location>
</feature>
<feature type="turn" evidence="11">
    <location>
        <begin position="369"/>
        <end position="372"/>
    </location>
</feature>
<feature type="strand" evidence="11">
    <location>
        <begin position="373"/>
        <end position="379"/>
    </location>
</feature>
<feature type="helix" evidence="11">
    <location>
        <begin position="381"/>
        <end position="385"/>
    </location>
</feature>
<feature type="strand" evidence="11">
    <location>
        <begin position="392"/>
        <end position="399"/>
    </location>
</feature>
<feature type="helix" evidence="11">
    <location>
        <begin position="402"/>
        <end position="405"/>
    </location>
</feature>
<feature type="turn" evidence="11">
    <location>
        <begin position="408"/>
        <end position="411"/>
    </location>
</feature>
<feature type="helix" evidence="11">
    <location>
        <begin position="415"/>
        <end position="438"/>
    </location>
</feature>
<feature type="turn" evidence="11">
    <location>
        <begin position="441"/>
        <end position="443"/>
    </location>
</feature>
<feature type="helix" evidence="11">
    <location>
        <begin position="446"/>
        <end position="461"/>
    </location>
</feature>
<feature type="helix" evidence="11">
    <location>
        <begin position="473"/>
        <end position="482"/>
    </location>
</feature>
<feature type="turn" evidence="11">
    <location>
        <begin position="483"/>
        <end position="486"/>
    </location>
</feature>
<feature type="helix" evidence="11">
    <location>
        <begin position="497"/>
        <end position="503"/>
    </location>
</feature>
<keyword id="KW-0002">3D-structure</keyword>
<keyword id="KW-0067">ATP-binding</keyword>
<keyword id="KW-1003">Cell membrane</keyword>
<keyword id="KW-0963">Cytoplasm</keyword>
<keyword id="KW-0968">Cytoplasmic vesicle</keyword>
<keyword id="KW-0903">Direct protein sequencing</keyword>
<keyword id="KW-0375">Hydrogen ion transport</keyword>
<keyword id="KW-0406">Ion transport</keyword>
<keyword id="KW-0472">Membrane</keyword>
<keyword id="KW-0547">Nucleotide-binding</keyword>
<keyword id="KW-1185">Reference proteome</keyword>
<keyword id="KW-0770">Synapse</keyword>
<keyword id="KW-0813">Transport</keyword>
<proteinExistence type="evidence at protein level"/>
<dbReference type="EMBL" id="M88690">
    <property type="protein sequence ID" value="AAA30400.1"/>
    <property type="molecule type" value="mRNA"/>
</dbReference>
<dbReference type="EMBL" id="M83131">
    <property type="protein sequence ID" value="AAA30391.1"/>
    <property type="molecule type" value="mRNA"/>
</dbReference>
<dbReference type="EMBL" id="X58385">
    <property type="protein sequence ID" value="CAA41275.1"/>
    <property type="molecule type" value="mRNA"/>
</dbReference>
<dbReference type="EMBL" id="BC123404">
    <property type="protein sequence ID" value="AAI23405.1"/>
    <property type="molecule type" value="mRNA"/>
</dbReference>
<dbReference type="PIR" id="S32614">
    <property type="entry name" value="S32614"/>
</dbReference>
<dbReference type="RefSeq" id="NP_001001146.1">
    <property type="nucleotide sequence ID" value="NM_001001146.1"/>
</dbReference>
<dbReference type="RefSeq" id="NP_788844.2">
    <property type="nucleotide sequence ID" value="NM_176671.3"/>
</dbReference>
<dbReference type="PDB" id="6XBW">
    <property type="method" value="EM"/>
    <property type="resolution" value="3.37 A"/>
    <property type="chains" value="D/E/F=1-511"/>
</dbReference>
<dbReference type="PDB" id="6XBY">
    <property type="method" value="EM"/>
    <property type="resolution" value="3.79 A"/>
    <property type="chains" value="D/E/F=1-511"/>
</dbReference>
<dbReference type="PDB" id="7KHR">
    <property type="method" value="EM"/>
    <property type="resolution" value="3.62 A"/>
    <property type="chains" value="D/E/F=1-511"/>
</dbReference>
<dbReference type="PDB" id="7UNE">
    <property type="method" value="EM"/>
    <property type="resolution" value="3.73 A"/>
    <property type="chains" value="O/P/Q=1-511"/>
</dbReference>
<dbReference type="PDBsum" id="6XBW"/>
<dbReference type="PDBsum" id="6XBY"/>
<dbReference type="PDBsum" id="7KHR"/>
<dbReference type="PDBsum" id="7UNE"/>
<dbReference type="EMDB" id="EMD-22121"/>
<dbReference type="EMDB" id="EMD-22122"/>
<dbReference type="EMDB" id="EMD-22880"/>
<dbReference type="EMDB" id="EMD-26622"/>
<dbReference type="SMR" id="P31408"/>
<dbReference type="CORUM" id="P31408"/>
<dbReference type="FunCoup" id="P31408">
    <property type="interactions" value="2894"/>
</dbReference>
<dbReference type="STRING" id="9913.ENSBTAP00000024812"/>
<dbReference type="ChEMBL" id="CHEMBL4798"/>
<dbReference type="PaxDb" id="9913-ENSBTAP00000024812"/>
<dbReference type="PeptideAtlas" id="P31408"/>
<dbReference type="Ensembl" id="ENSBTAT00000024812.7">
    <property type="protein sequence ID" value="ENSBTAP00000024812.5"/>
    <property type="gene ID" value="ENSBTAG00000018646.7"/>
</dbReference>
<dbReference type="GeneID" id="338082"/>
<dbReference type="KEGG" id="bta:338082"/>
<dbReference type="CTD" id="526"/>
<dbReference type="VEuPathDB" id="HostDB:ENSBTAG00000018646"/>
<dbReference type="VGNC" id="VGNC:26318">
    <property type="gene designation" value="ATP6V1B2"/>
</dbReference>
<dbReference type="eggNOG" id="KOG1351">
    <property type="taxonomic scope" value="Eukaryota"/>
</dbReference>
<dbReference type="GeneTree" id="ENSGT00940000155068"/>
<dbReference type="HOGENOM" id="CLU_022916_3_0_1"/>
<dbReference type="InParanoid" id="P31408"/>
<dbReference type="OMA" id="EGFKIKP"/>
<dbReference type="OrthoDB" id="1735853at2759"/>
<dbReference type="TreeFam" id="TF300313"/>
<dbReference type="Reactome" id="R-BTA-1222556">
    <property type="pathway name" value="ROS and RNS production in phagocytes"/>
</dbReference>
<dbReference type="Reactome" id="R-BTA-77387">
    <property type="pathway name" value="Insulin receptor recycling"/>
</dbReference>
<dbReference type="Reactome" id="R-BTA-917977">
    <property type="pathway name" value="Transferrin endocytosis and recycling"/>
</dbReference>
<dbReference type="Reactome" id="R-BTA-9639288">
    <property type="pathway name" value="Amino acids regulate mTORC1"/>
</dbReference>
<dbReference type="Reactome" id="R-BTA-983712">
    <property type="pathway name" value="Ion channel transport"/>
</dbReference>
<dbReference type="Proteomes" id="UP000009136">
    <property type="component" value="Chromosome 8"/>
</dbReference>
<dbReference type="Bgee" id="ENSBTAG00000018646">
    <property type="expression patterns" value="Expressed in occipital lobe and 101 other cell types or tissues"/>
</dbReference>
<dbReference type="GO" id="GO:0016324">
    <property type="term" value="C:apical plasma membrane"/>
    <property type="evidence" value="ECO:0000250"/>
    <property type="project" value="UniProtKB"/>
</dbReference>
<dbReference type="GO" id="GO:0030665">
    <property type="term" value="C:clathrin-coated vesicle membrane"/>
    <property type="evidence" value="ECO:0007669"/>
    <property type="project" value="UniProtKB-SubCell"/>
</dbReference>
<dbReference type="GO" id="GO:0005829">
    <property type="term" value="C:cytosol"/>
    <property type="evidence" value="ECO:0000250"/>
    <property type="project" value="UniProtKB"/>
</dbReference>
<dbReference type="GO" id="GO:0042470">
    <property type="term" value="C:melanosome"/>
    <property type="evidence" value="ECO:0007669"/>
    <property type="project" value="UniProtKB-SubCell"/>
</dbReference>
<dbReference type="GO" id="GO:0005886">
    <property type="term" value="C:plasma membrane"/>
    <property type="evidence" value="ECO:0000250"/>
    <property type="project" value="UniProtKB"/>
</dbReference>
<dbReference type="GO" id="GO:0030672">
    <property type="term" value="C:synaptic vesicle membrane"/>
    <property type="evidence" value="ECO:0007669"/>
    <property type="project" value="UniProtKB-SubCell"/>
</dbReference>
<dbReference type="GO" id="GO:0000221">
    <property type="term" value="C:vacuolar proton-transporting V-type ATPase, V1 domain"/>
    <property type="evidence" value="ECO:0000314"/>
    <property type="project" value="UniProtKB"/>
</dbReference>
<dbReference type="GO" id="GO:0005524">
    <property type="term" value="F:ATP binding"/>
    <property type="evidence" value="ECO:0007669"/>
    <property type="project" value="UniProtKB-KW"/>
</dbReference>
<dbReference type="GO" id="GO:0046961">
    <property type="term" value="F:proton-transporting ATPase activity, rotational mechanism"/>
    <property type="evidence" value="ECO:0000318"/>
    <property type="project" value="GO_Central"/>
</dbReference>
<dbReference type="GO" id="GO:0046034">
    <property type="term" value="P:ATP metabolic process"/>
    <property type="evidence" value="ECO:0007669"/>
    <property type="project" value="InterPro"/>
</dbReference>
<dbReference type="GO" id="GO:0045851">
    <property type="term" value="P:pH reduction"/>
    <property type="evidence" value="ECO:0000305"/>
    <property type="project" value="UniProtKB"/>
</dbReference>
<dbReference type="GO" id="GO:1902600">
    <property type="term" value="P:proton transmembrane transport"/>
    <property type="evidence" value="ECO:0000305"/>
    <property type="project" value="UniProtKB"/>
</dbReference>
<dbReference type="GO" id="GO:0007035">
    <property type="term" value="P:vacuolar acidification"/>
    <property type="evidence" value="ECO:0000318"/>
    <property type="project" value="GO_Central"/>
</dbReference>
<dbReference type="CDD" id="cd18112">
    <property type="entry name" value="ATP-synt_V_A-type_beta_C"/>
    <property type="match status" value="1"/>
</dbReference>
<dbReference type="CDD" id="cd18118">
    <property type="entry name" value="ATP-synt_V_A-type_beta_N"/>
    <property type="match status" value="1"/>
</dbReference>
<dbReference type="CDD" id="cd01135">
    <property type="entry name" value="V_A-ATPase_B"/>
    <property type="match status" value="1"/>
</dbReference>
<dbReference type="FunFam" id="3.40.50.12240:FF:000001">
    <property type="entry name" value="V-type proton ATPase subunit B, brain"/>
    <property type="match status" value="1"/>
</dbReference>
<dbReference type="Gene3D" id="3.40.50.12240">
    <property type="match status" value="1"/>
</dbReference>
<dbReference type="HAMAP" id="MF_00310">
    <property type="entry name" value="ATP_synth_B_arch"/>
    <property type="match status" value="1"/>
</dbReference>
<dbReference type="InterPro" id="IPR055190">
    <property type="entry name" value="ATP-synt_VA_C"/>
</dbReference>
<dbReference type="InterPro" id="IPR020003">
    <property type="entry name" value="ATPase_a/bsu_AS"/>
</dbReference>
<dbReference type="InterPro" id="IPR004100">
    <property type="entry name" value="ATPase_F1/V1/A1_a/bsu_N"/>
</dbReference>
<dbReference type="InterPro" id="IPR000194">
    <property type="entry name" value="ATPase_F1/V1/A1_a/bsu_nucl-bd"/>
</dbReference>
<dbReference type="InterPro" id="IPR005723">
    <property type="entry name" value="ATPase_V1-cplx_bsu"/>
</dbReference>
<dbReference type="InterPro" id="IPR027417">
    <property type="entry name" value="P-loop_NTPase"/>
</dbReference>
<dbReference type="InterPro" id="IPR022879">
    <property type="entry name" value="V-ATPase_su_B/beta"/>
</dbReference>
<dbReference type="NCBIfam" id="NF003235">
    <property type="entry name" value="PRK04196.1"/>
    <property type="match status" value="1"/>
</dbReference>
<dbReference type="NCBIfam" id="TIGR01040">
    <property type="entry name" value="V-ATPase_V1_B"/>
    <property type="match status" value="1"/>
</dbReference>
<dbReference type="PANTHER" id="PTHR43389">
    <property type="entry name" value="V-TYPE PROTON ATPASE SUBUNIT B"/>
    <property type="match status" value="1"/>
</dbReference>
<dbReference type="PANTHER" id="PTHR43389:SF5">
    <property type="entry name" value="V-TYPE PROTON ATPASE SUBUNIT B, BRAIN ISOFORM"/>
    <property type="match status" value="1"/>
</dbReference>
<dbReference type="Pfam" id="PF00006">
    <property type="entry name" value="ATP-synt_ab"/>
    <property type="match status" value="1"/>
</dbReference>
<dbReference type="Pfam" id="PF02874">
    <property type="entry name" value="ATP-synt_ab_N"/>
    <property type="match status" value="1"/>
</dbReference>
<dbReference type="Pfam" id="PF22919">
    <property type="entry name" value="ATP-synt_VA_C"/>
    <property type="match status" value="1"/>
</dbReference>
<dbReference type="PIRSF" id="PIRSF039114">
    <property type="entry name" value="V-ATPsynth_beta/V-ATPase_B"/>
    <property type="match status" value="1"/>
</dbReference>
<dbReference type="SUPFAM" id="SSF52540">
    <property type="entry name" value="P-loop containing nucleoside triphosphate hydrolases"/>
    <property type="match status" value="1"/>
</dbReference>
<dbReference type="PROSITE" id="PS00152">
    <property type="entry name" value="ATPASE_ALPHA_BETA"/>
    <property type="match status" value="1"/>
</dbReference>
<evidence type="ECO:0000250" key="1">
    <source>
        <dbReference type="UniProtKB" id="P21281"/>
    </source>
</evidence>
<evidence type="ECO:0000250" key="2">
    <source>
        <dbReference type="UniProtKB" id="P62814"/>
    </source>
</evidence>
<evidence type="ECO:0000250" key="3">
    <source>
        <dbReference type="UniProtKB" id="P62815"/>
    </source>
</evidence>
<evidence type="ECO:0000269" key="4">
    <source>
    </source>
</evidence>
<evidence type="ECO:0000269" key="5">
    <source>
    </source>
</evidence>
<evidence type="ECO:0000305" key="6"/>
<evidence type="ECO:0000305" key="7">
    <source>
    </source>
</evidence>
<evidence type="ECO:0000312" key="8">
    <source>
        <dbReference type="PDB" id="6XBW"/>
    </source>
</evidence>
<evidence type="ECO:0007744" key="9">
    <source>
        <dbReference type="PDB" id="6XBW"/>
    </source>
</evidence>
<evidence type="ECO:0007744" key="10">
    <source>
        <dbReference type="PDB" id="6XBY"/>
    </source>
</evidence>
<evidence type="ECO:0007829" key="11">
    <source>
        <dbReference type="PDB" id="6XBW"/>
    </source>
</evidence>
<gene>
    <name type="primary">ATP6V1B2</name>
    <name type="synonym">ATP6B2</name>
</gene>
<name>VATB2_BOVIN</name>
<comment type="function">
    <text evidence="2 5">Non-catalytic subunit of the V1 complex of vacuolar(H+)-ATPase (V-ATPase), a multisubunit enzyme composed of a peripheral complex (V1) that hydrolyzes ATP and a membrane integral complex (V0) that translocates protons (PubMed:32764564). V-ATPase is responsible for acidifying and maintaining the pH of intracellular compartments and in some cell types, is targeted to the plasma membrane, where it is responsible for acidifying the extracellular environment (PubMed:32764564). In renal intercalated cells, can partially compensate the lack of ATP6V1B1 and mediate secretion of protons (H+) into the urine under base-line conditions but not in conditions of acid load (By similarity).</text>
</comment>
<comment type="subunit">
    <text evidence="5">V-ATPase is a heteromultimeric enzyme made up of two complexes: the ATP-hydrolytic V1 complex and the proton translocation V0 complex (PubMed:32764564). The V1 complex consists of three catalytic AB heterodimers that form a heterohexamer, three peripheral stalks each consisting of EG heterodimers, one central rotor including subunits D and F, and the regulatory subunits C and H (PubMed:32764564). The proton translocation complex V0 consists of the proton transport subunit a, a ring of proteolipid subunits c9c'', rotary subunit d, subunits e and f, and the accessory subunits ATP6AP1/Ac45 and ATP6AP2/PRR (PubMed:32764564).</text>
</comment>
<comment type="subcellular location">
    <subcellularLocation>
        <location evidence="1">Apical cell membrane</location>
    </subcellularLocation>
    <subcellularLocation>
        <location evidence="1">Melanosome</location>
    </subcellularLocation>
    <subcellularLocation>
        <location evidence="2">Cytoplasm</location>
    </subcellularLocation>
    <subcellularLocation>
        <location evidence="5">Cytoplasmic vesicle</location>
        <location evidence="5">Clathrin-coated vesicle membrane</location>
        <topology evidence="6">Peripheral membrane protein</topology>
    </subcellularLocation>
    <subcellularLocation>
        <location evidence="3">Cytoplasmic vesicle</location>
        <location evidence="3">Secretory vesicle</location>
        <location evidence="3">Synaptic vesicle membrane</location>
        <topology evidence="6">Peripheral membrane protein</topology>
    </subcellularLocation>
</comment>
<comment type="tissue specificity">
    <text evidence="4 5">Expressed in brain (at protein level) (PubMed:1371275, PubMed:32764564). Expressed in all tissues tested, but highest in brain and in adrenal medulla (PubMed:1371275, PubMed:32764564).</text>
</comment>
<comment type="similarity">
    <text evidence="6">Belongs to the ATPase alpha/beta chains family.</text>
</comment>
<accession>P31408</accession>
<accession>A4FUX5</accession>
<accession>Q28058</accession>